<organism>
    <name type="scientific">Oceanobacillus iheyensis (strain DSM 14371 / CIP 107618 / JCM 11309 / KCTC 3954 / HTE831)</name>
    <dbReference type="NCBI Taxonomy" id="221109"/>
    <lineage>
        <taxon>Bacteria</taxon>
        <taxon>Bacillati</taxon>
        <taxon>Bacillota</taxon>
        <taxon>Bacilli</taxon>
        <taxon>Bacillales</taxon>
        <taxon>Bacillaceae</taxon>
        <taxon>Oceanobacillus</taxon>
    </lineage>
</organism>
<comment type="similarity">
    <text evidence="1">Belongs to the bacterial ribosomal protein bL28 family.</text>
</comment>
<proteinExistence type="inferred from homology"/>
<accession>Q8ER17</accession>
<reference key="1">
    <citation type="journal article" date="2002" name="Nucleic Acids Res.">
        <title>Genome sequence of Oceanobacillus iheyensis isolated from the Iheya Ridge and its unexpected adaptive capabilities to extreme environments.</title>
        <authorList>
            <person name="Takami H."/>
            <person name="Takaki Y."/>
            <person name="Uchiyama I."/>
        </authorList>
    </citation>
    <scope>NUCLEOTIDE SEQUENCE [LARGE SCALE GENOMIC DNA]</scope>
    <source>
        <strain>DSM 14371 / CIP 107618 / JCM 11309 / KCTC 3954 / HTE831</strain>
    </source>
</reference>
<protein>
    <recommendedName>
        <fullName evidence="1">Large ribosomal subunit protein bL28</fullName>
    </recommendedName>
    <alternativeName>
        <fullName evidence="3">50S ribosomal protein L28</fullName>
    </alternativeName>
</protein>
<dbReference type="EMBL" id="BA000028">
    <property type="protein sequence ID" value="BAC13470.1"/>
    <property type="molecule type" value="Genomic_DNA"/>
</dbReference>
<dbReference type="RefSeq" id="WP_010649390.1">
    <property type="nucleotide sequence ID" value="NC_004193.1"/>
</dbReference>
<dbReference type="SMR" id="Q8ER17"/>
<dbReference type="STRING" id="221109.gene:10733754"/>
<dbReference type="KEGG" id="oih:OB1514"/>
<dbReference type="eggNOG" id="COG0227">
    <property type="taxonomic scope" value="Bacteria"/>
</dbReference>
<dbReference type="HOGENOM" id="CLU_064548_7_1_9"/>
<dbReference type="OrthoDB" id="9805609at2"/>
<dbReference type="PhylomeDB" id="Q8ER17"/>
<dbReference type="Proteomes" id="UP000000822">
    <property type="component" value="Chromosome"/>
</dbReference>
<dbReference type="GO" id="GO:1990904">
    <property type="term" value="C:ribonucleoprotein complex"/>
    <property type="evidence" value="ECO:0007669"/>
    <property type="project" value="UniProtKB-KW"/>
</dbReference>
<dbReference type="GO" id="GO:0005840">
    <property type="term" value="C:ribosome"/>
    <property type="evidence" value="ECO:0007669"/>
    <property type="project" value="UniProtKB-KW"/>
</dbReference>
<dbReference type="GO" id="GO:0003735">
    <property type="term" value="F:structural constituent of ribosome"/>
    <property type="evidence" value="ECO:0007669"/>
    <property type="project" value="InterPro"/>
</dbReference>
<dbReference type="GO" id="GO:0006412">
    <property type="term" value="P:translation"/>
    <property type="evidence" value="ECO:0007669"/>
    <property type="project" value="UniProtKB-UniRule"/>
</dbReference>
<dbReference type="Gene3D" id="2.30.170.40">
    <property type="entry name" value="Ribosomal protein L28/L24"/>
    <property type="match status" value="1"/>
</dbReference>
<dbReference type="HAMAP" id="MF_00373">
    <property type="entry name" value="Ribosomal_bL28"/>
    <property type="match status" value="1"/>
</dbReference>
<dbReference type="InterPro" id="IPR050096">
    <property type="entry name" value="Bacterial_rp_bL28"/>
</dbReference>
<dbReference type="InterPro" id="IPR026569">
    <property type="entry name" value="Ribosomal_bL28"/>
</dbReference>
<dbReference type="InterPro" id="IPR034704">
    <property type="entry name" value="Ribosomal_bL28/bL31-like_sf"/>
</dbReference>
<dbReference type="InterPro" id="IPR001383">
    <property type="entry name" value="Ribosomal_bL28_bact-type"/>
</dbReference>
<dbReference type="InterPro" id="IPR037147">
    <property type="entry name" value="Ribosomal_bL28_sf"/>
</dbReference>
<dbReference type="NCBIfam" id="TIGR00009">
    <property type="entry name" value="L28"/>
    <property type="match status" value="1"/>
</dbReference>
<dbReference type="PANTHER" id="PTHR39080">
    <property type="entry name" value="50S RIBOSOMAL PROTEIN L28"/>
    <property type="match status" value="1"/>
</dbReference>
<dbReference type="PANTHER" id="PTHR39080:SF1">
    <property type="entry name" value="LARGE RIBOSOMAL SUBUNIT PROTEIN BL28A"/>
    <property type="match status" value="1"/>
</dbReference>
<dbReference type="Pfam" id="PF00830">
    <property type="entry name" value="Ribosomal_L28"/>
    <property type="match status" value="1"/>
</dbReference>
<dbReference type="SUPFAM" id="SSF143800">
    <property type="entry name" value="L28p-like"/>
    <property type="match status" value="1"/>
</dbReference>
<evidence type="ECO:0000255" key="1">
    <source>
        <dbReference type="HAMAP-Rule" id="MF_00373"/>
    </source>
</evidence>
<evidence type="ECO:0000256" key="2">
    <source>
        <dbReference type="SAM" id="MobiDB-lite"/>
    </source>
</evidence>
<evidence type="ECO:0000305" key="3"/>
<name>RL28_OCEIH</name>
<feature type="chain" id="PRO_0000178520" description="Large ribosomal subunit protein bL28">
    <location>
        <begin position="1"/>
        <end position="62"/>
    </location>
</feature>
<feature type="region of interest" description="Disordered" evidence="2">
    <location>
        <begin position="1"/>
        <end position="27"/>
    </location>
</feature>
<feature type="compositionally biased region" description="Polar residues" evidence="2">
    <location>
        <begin position="9"/>
        <end position="26"/>
    </location>
</feature>
<sequence>MARKCVVTGRQTRSGNQRSHAMNSNKRNWKANVQKVRIMVDGKPKKVYVSARALKSGKVERV</sequence>
<keyword id="KW-1185">Reference proteome</keyword>
<keyword id="KW-0687">Ribonucleoprotein</keyword>
<keyword id="KW-0689">Ribosomal protein</keyword>
<gene>
    <name evidence="1" type="primary">rpmB</name>
    <name type="ordered locus">OB1514</name>
</gene>